<keyword id="KW-0067">ATP-binding</keyword>
<keyword id="KW-1003">Cell membrane</keyword>
<keyword id="KW-0406">Ion transport</keyword>
<keyword id="KW-0472">Membrane</keyword>
<keyword id="KW-0547">Nucleotide-binding</keyword>
<keyword id="KW-0630">Potassium</keyword>
<keyword id="KW-0633">Potassium transport</keyword>
<keyword id="KW-0812">Transmembrane</keyword>
<keyword id="KW-1133">Transmembrane helix</keyword>
<keyword id="KW-0813">Transport</keyword>
<sequence>MNTIRNSICLTIITMVLCGFLFPLAITLIGQIFFYQQANGSLITYDNRIVGSKLIGQHWTETRYFHGRPSAVDYNMNPEKLYKNGVSSGGSNESNGNTELIARMKHHVKFGNSNVTIDAATSSGSGLDPHITVENALKQAPRIADARHISTSRVADLIQHRKQRGVLTNDYVNVLELNIALDKMKD</sequence>
<organism>
    <name type="scientific">Staphylococcus aureus (strain MW2)</name>
    <dbReference type="NCBI Taxonomy" id="196620"/>
    <lineage>
        <taxon>Bacteria</taxon>
        <taxon>Bacillati</taxon>
        <taxon>Bacillota</taxon>
        <taxon>Bacilli</taxon>
        <taxon>Bacillales</taxon>
        <taxon>Staphylococcaceae</taxon>
        <taxon>Staphylococcus</taxon>
    </lineage>
</organism>
<feature type="chain" id="PRO_0000197015" description="Potassium-transporting ATPase KdpC subunit">
    <location>
        <begin position="1"/>
        <end position="186"/>
    </location>
</feature>
<feature type="transmembrane region" description="Helical" evidence="1">
    <location>
        <begin position="10"/>
        <end position="30"/>
    </location>
</feature>
<reference key="1">
    <citation type="journal article" date="2002" name="Lancet">
        <title>Genome and virulence determinants of high virulence community-acquired MRSA.</title>
        <authorList>
            <person name="Baba T."/>
            <person name="Takeuchi F."/>
            <person name="Kuroda M."/>
            <person name="Yuzawa H."/>
            <person name="Aoki K."/>
            <person name="Oguchi A."/>
            <person name="Nagai Y."/>
            <person name="Iwama N."/>
            <person name="Asano K."/>
            <person name="Naimi T."/>
            <person name="Kuroda H."/>
            <person name="Cui L."/>
            <person name="Yamamoto K."/>
            <person name="Hiramatsu K."/>
        </authorList>
    </citation>
    <scope>NUCLEOTIDE SEQUENCE [LARGE SCALE GENOMIC DNA]</scope>
    <source>
        <strain>MW2</strain>
    </source>
</reference>
<protein>
    <recommendedName>
        <fullName evidence="1">Potassium-transporting ATPase KdpC subunit</fullName>
    </recommendedName>
    <alternativeName>
        <fullName evidence="1">ATP phosphohydrolase [potassium-transporting] C chain</fullName>
    </alternativeName>
    <alternativeName>
        <fullName evidence="1">Potassium-binding and translocating subunit C</fullName>
    </alternativeName>
    <alternativeName>
        <fullName evidence="1">Potassium-translocating ATPase C chain</fullName>
    </alternativeName>
</protein>
<dbReference type="EMBL" id="BA000033">
    <property type="protein sequence ID" value="BAB95864.1"/>
    <property type="molecule type" value="Genomic_DNA"/>
</dbReference>
<dbReference type="RefSeq" id="WP_001092409.1">
    <property type="nucleotide sequence ID" value="NC_003923.1"/>
</dbReference>
<dbReference type="SMR" id="Q8NVI3"/>
<dbReference type="KEGG" id="sam:MW1999"/>
<dbReference type="HOGENOM" id="CLU_077094_2_0_9"/>
<dbReference type="GO" id="GO:0005886">
    <property type="term" value="C:plasma membrane"/>
    <property type="evidence" value="ECO:0007669"/>
    <property type="project" value="UniProtKB-SubCell"/>
</dbReference>
<dbReference type="GO" id="GO:0005524">
    <property type="term" value="F:ATP binding"/>
    <property type="evidence" value="ECO:0007669"/>
    <property type="project" value="UniProtKB-UniRule"/>
</dbReference>
<dbReference type="GO" id="GO:0008556">
    <property type="term" value="F:P-type potassium transmembrane transporter activity"/>
    <property type="evidence" value="ECO:0007669"/>
    <property type="project" value="InterPro"/>
</dbReference>
<dbReference type="HAMAP" id="MF_00276">
    <property type="entry name" value="KdpC"/>
    <property type="match status" value="1"/>
</dbReference>
<dbReference type="InterPro" id="IPR003820">
    <property type="entry name" value="KdpC"/>
</dbReference>
<dbReference type="NCBIfam" id="TIGR00681">
    <property type="entry name" value="kdpC"/>
    <property type="match status" value="1"/>
</dbReference>
<dbReference type="NCBIfam" id="NF010602">
    <property type="entry name" value="PRK13998.1"/>
    <property type="match status" value="1"/>
</dbReference>
<dbReference type="PANTHER" id="PTHR30042">
    <property type="entry name" value="POTASSIUM-TRANSPORTING ATPASE C CHAIN"/>
    <property type="match status" value="1"/>
</dbReference>
<dbReference type="PANTHER" id="PTHR30042:SF2">
    <property type="entry name" value="POTASSIUM-TRANSPORTING ATPASE KDPC SUBUNIT"/>
    <property type="match status" value="1"/>
</dbReference>
<dbReference type="Pfam" id="PF02669">
    <property type="entry name" value="KdpC"/>
    <property type="match status" value="1"/>
</dbReference>
<dbReference type="PIRSF" id="PIRSF001296">
    <property type="entry name" value="K_ATPase_KdpC"/>
    <property type="match status" value="1"/>
</dbReference>
<comment type="function">
    <text evidence="1">Part of the high-affinity ATP-driven potassium transport (or Kdp) system, which catalyzes the hydrolysis of ATP coupled with the electrogenic transport of potassium into the cytoplasm. This subunit acts as a catalytic chaperone that increases the ATP-binding affinity of the ATP-hydrolyzing subunit KdpB by the formation of a transient KdpB/KdpC/ATP ternary complex.</text>
</comment>
<comment type="subunit">
    <text evidence="1">The system is composed of three essential subunits: KdpA, KdpB and KdpC.</text>
</comment>
<comment type="subcellular location">
    <subcellularLocation>
        <location evidence="1">Cell membrane</location>
        <topology evidence="1">Single-pass membrane protein</topology>
    </subcellularLocation>
</comment>
<comment type="similarity">
    <text evidence="1">Belongs to the KdpC family.</text>
</comment>
<accession>Q8NVI3</accession>
<proteinExistence type="inferred from homology"/>
<name>KDPC_STAAW</name>
<gene>
    <name evidence="1" type="primary">kdpC</name>
    <name type="ordered locus">MW1999</name>
</gene>
<evidence type="ECO:0000255" key="1">
    <source>
        <dbReference type="HAMAP-Rule" id="MF_00276"/>
    </source>
</evidence>